<protein>
    <recommendedName>
        <fullName evidence="10">E3 ubiquitin-protein ligase HECTD1</fullName>
        <ecNumber evidence="6">2.3.2.26</ecNumber>
    </recommendedName>
    <alternativeName>
        <fullName>E3 ligase for inhibin receptor</fullName>
        <shortName evidence="9">EULIR</shortName>
    </alternativeName>
    <alternativeName>
        <fullName>HECT domain-containing protein 1</fullName>
    </alternativeName>
</protein>
<accession>Q9ULT8</accession>
<accession>D3DS86</accession>
<accession>Q6P445</accession>
<accession>Q86VJ1</accession>
<accession>Q96F34</accession>
<accession>Q9UFZ7</accession>
<gene>
    <name evidence="8 11" type="primary">HECTD1</name>
    <name type="synonym">KIAA1131</name>
</gene>
<keyword id="KW-0002">3D-structure</keyword>
<keyword id="KW-0040">ANK repeat</keyword>
<keyword id="KW-0597">Phosphoprotein</keyword>
<keyword id="KW-1267">Proteomics identification</keyword>
<keyword id="KW-1185">Reference proteome</keyword>
<keyword id="KW-0677">Repeat</keyword>
<keyword id="KW-0808">Transferase</keyword>
<keyword id="KW-0833">Ubl conjugation pathway</keyword>
<reference key="1">
    <citation type="submission" date="2003-03" db="EMBL/GenBank/DDBJ databases">
        <title>EULIR is an E3 ubiquitin ligase for inhibin receptor.</title>
        <authorList>
            <person name="Zhang H."/>
        </authorList>
    </citation>
    <scope>NUCLEOTIDE SEQUENCE [MRNA]</scope>
    <scope>VARIANT LEU-2027</scope>
</reference>
<reference key="2">
    <citation type="journal article" date="2003" name="Nature">
        <title>The DNA sequence and analysis of human chromosome 14.</title>
        <authorList>
            <person name="Heilig R."/>
            <person name="Eckenberg R."/>
            <person name="Petit J.-L."/>
            <person name="Fonknechten N."/>
            <person name="Da Silva C."/>
            <person name="Cattolico L."/>
            <person name="Levy M."/>
            <person name="Barbe V."/>
            <person name="De Berardinis V."/>
            <person name="Ureta-Vidal A."/>
            <person name="Pelletier E."/>
            <person name="Vico V."/>
            <person name="Anthouard V."/>
            <person name="Rowen L."/>
            <person name="Madan A."/>
            <person name="Qin S."/>
            <person name="Sun H."/>
            <person name="Du H."/>
            <person name="Pepin K."/>
            <person name="Artiguenave F."/>
            <person name="Robert C."/>
            <person name="Cruaud C."/>
            <person name="Bruels T."/>
            <person name="Jaillon O."/>
            <person name="Friedlander L."/>
            <person name="Samson G."/>
            <person name="Brottier P."/>
            <person name="Cure S."/>
            <person name="Segurens B."/>
            <person name="Aniere F."/>
            <person name="Samain S."/>
            <person name="Crespeau H."/>
            <person name="Abbasi N."/>
            <person name="Aiach N."/>
            <person name="Boscus D."/>
            <person name="Dickhoff R."/>
            <person name="Dors M."/>
            <person name="Dubois I."/>
            <person name="Friedman C."/>
            <person name="Gouyvenoux M."/>
            <person name="James R."/>
            <person name="Madan A."/>
            <person name="Mairey-Estrada B."/>
            <person name="Mangenot S."/>
            <person name="Martins N."/>
            <person name="Menard M."/>
            <person name="Oztas S."/>
            <person name="Ratcliffe A."/>
            <person name="Shaffer T."/>
            <person name="Trask B."/>
            <person name="Vacherie B."/>
            <person name="Bellemere C."/>
            <person name="Belser C."/>
            <person name="Besnard-Gonnet M."/>
            <person name="Bartol-Mavel D."/>
            <person name="Boutard M."/>
            <person name="Briez-Silla S."/>
            <person name="Combette S."/>
            <person name="Dufosse-Laurent V."/>
            <person name="Ferron C."/>
            <person name="Lechaplais C."/>
            <person name="Louesse C."/>
            <person name="Muselet D."/>
            <person name="Magdelenat G."/>
            <person name="Pateau E."/>
            <person name="Petit E."/>
            <person name="Sirvain-Trukniewicz P."/>
            <person name="Trybou A."/>
            <person name="Vega-Czarny N."/>
            <person name="Bataille E."/>
            <person name="Bluet E."/>
            <person name="Bordelais I."/>
            <person name="Dubois M."/>
            <person name="Dumont C."/>
            <person name="Guerin T."/>
            <person name="Haffray S."/>
            <person name="Hammadi R."/>
            <person name="Muanga J."/>
            <person name="Pellouin V."/>
            <person name="Robert D."/>
            <person name="Wunderle E."/>
            <person name="Gauguet G."/>
            <person name="Roy A."/>
            <person name="Sainte-Marthe L."/>
            <person name="Verdier J."/>
            <person name="Verdier-Discala C."/>
            <person name="Hillier L.W."/>
            <person name="Fulton L."/>
            <person name="McPherson J."/>
            <person name="Matsuda F."/>
            <person name="Wilson R."/>
            <person name="Scarpelli C."/>
            <person name="Gyapay G."/>
            <person name="Wincker P."/>
            <person name="Saurin W."/>
            <person name="Quetier F."/>
            <person name="Waterston R."/>
            <person name="Hood L."/>
            <person name="Weissenbach J."/>
        </authorList>
    </citation>
    <scope>NUCLEOTIDE SEQUENCE [LARGE SCALE GENOMIC DNA]</scope>
</reference>
<reference key="3">
    <citation type="submission" date="2005-09" db="EMBL/GenBank/DDBJ databases">
        <authorList>
            <person name="Mural R.J."/>
            <person name="Istrail S."/>
            <person name="Sutton G."/>
            <person name="Florea L."/>
            <person name="Halpern A.L."/>
            <person name="Mobarry C.M."/>
            <person name="Lippert R."/>
            <person name="Walenz B."/>
            <person name="Shatkay H."/>
            <person name="Dew I."/>
            <person name="Miller J.R."/>
            <person name="Flanigan M.J."/>
            <person name="Edwards N.J."/>
            <person name="Bolanos R."/>
            <person name="Fasulo D."/>
            <person name="Halldorsson B.V."/>
            <person name="Hannenhalli S."/>
            <person name="Turner R."/>
            <person name="Yooseph S."/>
            <person name="Lu F."/>
            <person name="Nusskern D.R."/>
            <person name="Shue B.C."/>
            <person name="Zheng X.H."/>
            <person name="Zhong F."/>
            <person name="Delcher A.L."/>
            <person name="Huson D.H."/>
            <person name="Kravitz S.A."/>
            <person name="Mouchard L."/>
            <person name="Reinert K."/>
            <person name="Remington K.A."/>
            <person name="Clark A.G."/>
            <person name="Waterman M.S."/>
            <person name="Eichler E.E."/>
            <person name="Adams M.D."/>
            <person name="Hunkapiller M.W."/>
            <person name="Myers E.W."/>
            <person name="Venter J.C."/>
        </authorList>
    </citation>
    <scope>NUCLEOTIDE SEQUENCE [LARGE SCALE GENOMIC DNA]</scope>
</reference>
<reference key="4">
    <citation type="journal article" date="1999" name="DNA Res.">
        <title>Characterization of cDNA clones selected by the GeneMark analysis from size-fractionated cDNA libraries from human brain.</title>
        <authorList>
            <person name="Hirosawa M."/>
            <person name="Nagase T."/>
            <person name="Ishikawa K."/>
            <person name="Kikuno R."/>
            <person name="Nomura N."/>
            <person name="Ohara O."/>
        </authorList>
    </citation>
    <scope>NUCLEOTIDE SEQUENCE [LARGE SCALE MRNA] OF 443-2610</scope>
    <source>
        <tissue>Brain</tissue>
    </source>
</reference>
<reference key="5">
    <citation type="journal article" date="2007" name="BMC Genomics">
        <title>The full-ORF clone resource of the German cDNA consortium.</title>
        <authorList>
            <person name="Bechtel S."/>
            <person name="Rosenfelder H."/>
            <person name="Duda A."/>
            <person name="Schmidt C.P."/>
            <person name="Ernst U."/>
            <person name="Wellenreuther R."/>
            <person name="Mehrle A."/>
            <person name="Schuster C."/>
            <person name="Bahr A."/>
            <person name="Bloecker H."/>
            <person name="Heubner D."/>
            <person name="Hoerlein A."/>
            <person name="Michel G."/>
            <person name="Wedler H."/>
            <person name="Koehrer K."/>
            <person name="Ottenwaelder B."/>
            <person name="Poustka A."/>
            <person name="Wiemann S."/>
            <person name="Schupp I."/>
        </authorList>
    </citation>
    <scope>NUCLEOTIDE SEQUENCE [LARGE SCALE MRNA] OF 1652-2610</scope>
    <source>
        <tissue>Testis</tissue>
    </source>
</reference>
<reference key="6">
    <citation type="journal article" date="2004" name="Genome Res.">
        <title>The status, quality, and expansion of the NIH full-length cDNA project: the Mammalian Gene Collection (MGC).</title>
        <authorList>
            <consortium name="The MGC Project Team"/>
        </authorList>
    </citation>
    <scope>NUCLEOTIDE SEQUENCE [LARGE SCALE MRNA] OF 2091-2610</scope>
    <source>
        <tissue>Muscle</tissue>
        <tissue>Urinary bladder</tissue>
    </source>
</reference>
<reference key="7">
    <citation type="journal article" date="2002" name="Genome Res.">
        <title>Protein-protein interactions between large proteins: two-hybrid screening using a functionally classified library composed of long cDNAs.</title>
        <authorList>
            <person name="Nakayama M."/>
            <person name="Kikuno R."/>
            <person name="Ohara O."/>
        </authorList>
    </citation>
    <scope>INTERACTION WITH IGSF1</scope>
</reference>
<reference key="8">
    <citation type="journal article" date="2008" name="Proc. Natl. Acad. Sci. U.S.A.">
        <title>A quantitative atlas of mitotic phosphorylation.</title>
        <authorList>
            <person name="Dephoure N."/>
            <person name="Zhou C."/>
            <person name="Villen J."/>
            <person name="Beausoleil S.A."/>
            <person name="Bakalarski C.E."/>
            <person name="Elledge S.J."/>
            <person name="Gygi S.P."/>
        </authorList>
    </citation>
    <scope>PHOSPHORYLATION [LARGE SCALE ANALYSIS] AT SER-1488</scope>
    <scope>IDENTIFICATION BY MASS SPECTROMETRY [LARGE SCALE ANALYSIS]</scope>
    <source>
        <tissue>Cervix carcinoma</tissue>
    </source>
</reference>
<reference key="9">
    <citation type="journal article" date="2009" name="Anal. Chem.">
        <title>Lys-N and trypsin cover complementary parts of the phosphoproteome in a refined SCX-based approach.</title>
        <authorList>
            <person name="Gauci S."/>
            <person name="Helbig A.O."/>
            <person name="Slijper M."/>
            <person name="Krijgsveld J."/>
            <person name="Heck A.J."/>
            <person name="Mohammed S."/>
        </authorList>
    </citation>
    <scope>IDENTIFICATION BY MASS SPECTROMETRY [LARGE SCALE ANALYSIS]</scope>
</reference>
<reference key="10">
    <citation type="journal article" date="2010" name="Sci. Signal.">
        <title>Quantitative phosphoproteomics reveals widespread full phosphorylation site occupancy during mitosis.</title>
        <authorList>
            <person name="Olsen J.V."/>
            <person name="Vermeulen M."/>
            <person name="Santamaria A."/>
            <person name="Kumar C."/>
            <person name="Miller M.L."/>
            <person name="Jensen L.J."/>
            <person name="Gnad F."/>
            <person name="Cox J."/>
            <person name="Jensen T.S."/>
            <person name="Nigg E.A."/>
            <person name="Brunak S."/>
            <person name="Mann M."/>
        </authorList>
    </citation>
    <scope>IDENTIFICATION BY MASS SPECTROMETRY [LARGE SCALE ANALYSIS]</scope>
    <source>
        <tissue>Cervix carcinoma</tissue>
    </source>
</reference>
<reference key="11">
    <citation type="journal article" date="2011" name="BMC Syst. Biol.">
        <title>Initial characterization of the human central proteome.</title>
        <authorList>
            <person name="Burkard T.R."/>
            <person name="Planyavsky M."/>
            <person name="Kaupe I."/>
            <person name="Breitwieser F.P."/>
            <person name="Buerckstuemmer T."/>
            <person name="Bennett K.L."/>
            <person name="Superti-Furga G."/>
            <person name="Colinge J."/>
        </authorList>
    </citation>
    <scope>IDENTIFICATION BY MASS SPECTROMETRY [LARGE SCALE ANALYSIS]</scope>
</reference>
<reference key="12">
    <citation type="journal article" date="2011" name="Sci. Signal.">
        <title>System-wide temporal characterization of the proteome and phosphoproteome of human embryonic stem cell differentiation.</title>
        <authorList>
            <person name="Rigbolt K.T."/>
            <person name="Prokhorova T.A."/>
            <person name="Akimov V."/>
            <person name="Henningsen J."/>
            <person name="Johansen P.T."/>
            <person name="Kratchmarova I."/>
            <person name="Kassem M."/>
            <person name="Mann M."/>
            <person name="Olsen J.V."/>
            <person name="Blagoev B."/>
        </authorList>
    </citation>
    <scope>PHOSPHORYLATION [LARGE SCALE ANALYSIS] AT SER-631</scope>
    <scope>IDENTIFICATION BY MASS SPECTROMETRY [LARGE SCALE ANALYSIS]</scope>
</reference>
<reference key="13">
    <citation type="journal article" date="2013" name="J. Proteome Res.">
        <title>Toward a comprehensive characterization of a human cancer cell phosphoproteome.</title>
        <authorList>
            <person name="Zhou H."/>
            <person name="Di Palma S."/>
            <person name="Preisinger C."/>
            <person name="Peng M."/>
            <person name="Polat A.N."/>
            <person name="Heck A.J."/>
            <person name="Mohammed S."/>
        </authorList>
    </citation>
    <scope>PHOSPHORYLATION [LARGE SCALE ANALYSIS] AT THR-1760 AND SER-1772</scope>
    <scope>IDENTIFICATION BY MASS SPECTROMETRY [LARGE SCALE ANALYSIS]</scope>
    <source>
        <tissue>Cervix carcinoma</tissue>
        <tissue>Erythroleukemia</tissue>
    </source>
</reference>
<reference key="14">
    <citation type="journal article" date="2014" name="J. Proteomics">
        <title>An enzyme assisted RP-RPLC approach for in-depth analysis of human liver phosphoproteome.</title>
        <authorList>
            <person name="Bian Y."/>
            <person name="Song C."/>
            <person name="Cheng K."/>
            <person name="Dong M."/>
            <person name="Wang F."/>
            <person name="Huang J."/>
            <person name="Sun D."/>
            <person name="Wang L."/>
            <person name="Ye M."/>
            <person name="Zou H."/>
        </authorList>
    </citation>
    <scope>PHOSPHORYLATION [LARGE SCALE ANALYSIS] AT SER-2318</scope>
    <scope>IDENTIFICATION BY MASS SPECTROMETRY [LARGE SCALE ANALYSIS]</scope>
    <source>
        <tissue>Liver</tissue>
    </source>
</reference>
<reference key="15">
    <citation type="journal article" date="2021" name="Cell Stem Cell">
        <title>HectD1 controls hematopoietic stem cell regeneration by coordinating ribosome assembly and protein synthesis.</title>
        <authorList>
            <person name="Lv K."/>
            <person name="Gong C."/>
            <person name="Antony C."/>
            <person name="Han X."/>
            <person name="Ren J.G."/>
            <person name="Donaghy R."/>
            <person name="Cheng Y."/>
            <person name="Pellegrino S."/>
            <person name="Warren A.J."/>
            <person name="Paralkar V.R."/>
            <person name="Tong W."/>
        </authorList>
    </citation>
    <scope>FUNCTION</scope>
    <scope>CATALYTIC ACTIVITY</scope>
    <scope>PATHWAY</scope>
    <scope>MUTAGENESIS OF CYS-2579</scope>
</reference>
<reference key="16">
    <citation type="submission" date="2006-10" db="PDB data bank">
        <title>Solution structure of MIB-HERC2 domain in HECT domain containing protein 1.</title>
        <authorList>
            <consortium name="RIKEN structural genomics initiative (RSGI)"/>
        </authorList>
    </citation>
    <scope>STRUCTURE BY NMR OF 1266-1338</scope>
</reference>
<sequence length="2610" mass="289368">MADVDPDTLLEWLQMGQGDERDMQLIALEQLCMLLLMSDNVDRCFETCPPRTFLPALCKIFLDESAPDNVLEVTARAITYYLDVSAECTRRIVGVDGAIKALCNRLVVVELNNRTSRDLAEQCVKVLELICTRESGAVFEAGGLNCVLTFIRDSGHLVHKDTLHSAMAVVSRLCGKMEPQDSSLEICVESLSSLLKHEDHQVSDGALRCFASLADRFTRRGVDPAPLAKHGLTEELLSRMAAAGGTVSGPSSACKPGRSTTGAPSTTADSKLSNQVSTIVSLLSTLCRGSPVVTHDLLRSELPDSIESALQGDERCVLDTMRLVDLLLVLLFEGRKALPKSSAGSTGRIPGLRRLDSSGERSHRQLIDCIRSKDTDALIDAIDTGAFEVNFMDDVGQTLLNWASAFGTQEMVEFLCERGADVNRGQRSSSLHYAACFGRPQVAKTLLRHGANPDLRDEDGKTPLDKARERGHSEVVAILQSPGDWMCPVNKGDDKKKKDTNKDEEECNEPKGDPEMAPIYLKRLLPVFAQTFQQTMLPSIRKASLALIRKMIHFCSEALLKEVCDSDVGHNLPTILVEITATVLDQEDDDDGHLLALQIIRDLVDKGGDIFLDQLARLGVISKVSTLAGPSSDDENEEESKPEKEDEPQEDAKELQQGKPYHWRDWSIIRGRDCLYIWSDAAALELSNGSNGWFRFILDGKLATMYSSGSPEGGSDSSESRSEFLEKLQRARGQVKPSTSSQPILSAPGPTKLTVGNWSLTCLKEGEIAIHNSDGQQATILKEDLPGFVFESNRGTKHSFTAETSLGSEFVTGWTGKRGRKLKSKLEKTKQKVRTMARDLYDDHFKAVESMPRGVVVTLRNIATQLESSWELHTNRQCIESENTWRDLMKTALENLIVLLKDENTISPYEMCSSGLVQALLTVLNNSMDLDMKQDCSQLVERINVFKTAFSENEDDESRPAVALIRKLIAVLESIERLPLHLYDTPGSTYNLQILTRRLRFRLERAPGETALIDRTGRMLKMEPLATVESLEQYLLKMVAKQWYDFDRSSFVFVRKLREGQNFIFRHQHDFDENGIIYWIGTNAKTAYEWVNPAAYGLVVVTSSEGRNLPYGRLEDILSRDNSALNCHSNDDKNAWFAIDLGLWVIPSAYTLRHARGYGRSALRNWVFQVSKDGQNWTSLYTHVDDCSLNEPGSTATWPLDPPKDEKQGWRHVRIKQMGKNASGQTHYLSLSGFELYGTVNGVCEDQLGKAAKEAEANLRRQRRLVRSQVLKYMVPGARVIRGLDWKWRDQDGSPQGEGTVTGELHNGWIDVTWDAGGSNSYRMGAEGKFDLKLAPGYDPDTVASPKPVSSTVSGTTQSWSSLVKNNCPDKTSAAAGSSSRKGSSSSVCSVASSSDISLGSTKTERRSEIVMEHSIVSGADVHEPIVVLSSAENVPQTEVGSSSSASTSTLTAETGSENAERKLGPDSSVRTPGESSAISMGIVSVSSPDVSSVSELTNKEAASQRPLSSSASNRLSVSSLLAAGAPMSSSASVPNLSSRETSSLESFVRRVANIARTNATNNMNLSRSSSDNNTNTLGRNVMSTATSPLMGAQSFPNLTTPGTTSTVTMSTSSVTSSSNVATATTVLSVGQSLSNTLTTSLTSTSSESDTGQEAEYSLYDFLDSCRASTLLAELDDDEDLPEPDEEDDENEDDNQEDQEYEEVMILRRPSLQRRAGSRSDVTHHAVTSQLPQVPAGAGSRPIGEQEEEEYETKGGRRRTWDDDYVLKRQFSALVPAFDPRPGRTNVQQTTDLEIPPPGTPHSELLEEVECTPSPRLALTLKVTGLGTTREVELPLTNFRSTIFYYVQKLLQLSCNGNVKSDKLRRIWEPTYTIMYREMKDSDKEKENGKMGCWSIEHVEQYLGTDELPKNDLITYLQKNADAAFLRHWKLTGTNKSIRKNRNCSQLIAAYKDFCEHGTKSGLNQGAISTLQSSDILNLTKEQPQAKAGNGQNSCGVEDVLQLLRILYIVASDPYSRISQEDGDEQPQFTFPPDEFTSKKITTKILQQIEEPLALASGALPDWCEQLTSKCPFLIPFETRQLYFTCTAFGASRAIVWLQNRREATVERTRTTSSVRRDDPGEFRVGRLKHERVKVPRGESLMEWAENVMQIHADRKSVLEVEFLGEEGTGLGPTLEFYALVAAEFQRTDLGAWLCDDNFPDDESRHVDLGGGLKPPGYYVQRSCGLFTAPFPQDSDELERITKLFHFLGIFLAKCIQDNRLVDLPISKPFFKLMCMGDIKSNMSKLIYESRGDRDLHCTESQSEASTEEGHDSLSVGSFEEDSKSEFILDPPKPKPPAWFNGILTWEDFELVNPHRARFLKEIKDLAIKRRQILSNKGLSEDEKNTKLQELVLKNPSGSGPPLSIEDLGLNFQFCPSSRIYGFTAVDLKPSGEDEMITMDNAEEYVDLMFDFCMHTGIQKQMEAFRDGFNKVFPMEKLSSFSHEEVQMILCGNQSPSWAAEDIINYTEPKLGYTRDSPGFLRFVRVLCGMSSDERKAFLQFTTGCSTLPPGGLANLHPRLTVVRKVDATDASYPSVNTCVHYLKLPEYSSEEIMRERLLAATMEKGFHLN</sequence>
<dbReference type="EC" id="2.3.2.26" evidence="6"/>
<dbReference type="EMBL" id="AY254380">
    <property type="protein sequence ID" value="AAP13073.1"/>
    <property type="molecule type" value="mRNA"/>
</dbReference>
<dbReference type="EMBL" id="AL121808">
    <property type="status" value="NOT_ANNOTATED_CDS"/>
    <property type="molecule type" value="Genomic_DNA"/>
</dbReference>
<dbReference type="EMBL" id="AL136418">
    <property type="status" value="NOT_ANNOTATED_CDS"/>
    <property type="molecule type" value="Genomic_DNA"/>
</dbReference>
<dbReference type="EMBL" id="CH471078">
    <property type="protein sequence ID" value="EAW65950.1"/>
    <property type="molecule type" value="Genomic_DNA"/>
</dbReference>
<dbReference type="EMBL" id="CH471078">
    <property type="protein sequence ID" value="EAW65952.1"/>
    <property type="molecule type" value="Genomic_DNA"/>
</dbReference>
<dbReference type="EMBL" id="AB032957">
    <property type="protein sequence ID" value="BAA86445.2"/>
    <property type="molecule type" value="mRNA"/>
</dbReference>
<dbReference type="EMBL" id="AL110222">
    <property type="protein sequence ID" value="CAB53681.1"/>
    <property type="molecule type" value="mRNA"/>
</dbReference>
<dbReference type="EMBL" id="BC011658">
    <property type="protein sequence ID" value="AAH11658.2"/>
    <property type="molecule type" value="mRNA"/>
</dbReference>
<dbReference type="EMBL" id="BC063686">
    <property type="protein sequence ID" value="AAH63686.1"/>
    <property type="molecule type" value="mRNA"/>
</dbReference>
<dbReference type="CCDS" id="CCDS41939.1"/>
<dbReference type="PIR" id="T14761">
    <property type="entry name" value="T14761"/>
</dbReference>
<dbReference type="RefSeq" id="NP_056197.3">
    <property type="nucleotide sequence ID" value="NM_015382.4"/>
</dbReference>
<dbReference type="RefSeq" id="XP_005267559.2">
    <property type="nucleotide sequence ID" value="XM_005267502.4"/>
</dbReference>
<dbReference type="RefSeq" id="XP_054231745.1">
    <property type="nucleotide sequence ID" value="XM_054375770.1"/>
</dbReference>
<dbReference type="PDB" id="2DK3">
    <property type="method" value="NMR"/>
    <property type="chains" value="A=1266-1338"/>
</dbReference>
<dbReference type="PDB" id="2LC3">
    <property type="method" value="NMR"/>
    <property type="chains" value="A=1879-1966"/>
</dbReference>
<dbReference type="PDB" id="3DKM">
    <property type="method" value="X-ray"/>
    <property type="resolution" value="1.60 A"/>
    <property type="chains" value="A=1271-1341"/>
</dbReference>
<dbReference type="PDBsum" id="2DK3"/>
<dbReference type="PDBsum" id="2LC3"/>
<dbReference type="PDBsum" id="3DKM"/>
<dbReference type="BMRB" id="Q9ULT8"/>
<dbReference type="SMR" id="Q9ULT8"/>
<dbReference type="BioGRID" id="117359">
    <property type="interactions" value="1098"/>
</dbReference>
<dbReference type="DIP" id="DIP-31669N"/>
<dbReference type="FunCoup" id="Q9ULT8">
    <property type="interactions" value="3100"/>
</dbReference>
<dbReference type="IntAct" id="Q9ULT8">
    <property type="interactions" value="89"/>
</dbReference>
<dbReference type="MINT" id="Q9ULT8"/>
<dbReference type="STRING" id="9606.ENSP00000382269"/>
<dbReference type="GlyCosmos" id="Q9ULT8">
    <property type="glycosylation" value="12 sites, 2 glycans"/>
</dbReference>
<dbReference type="GlyGen" id="Q9ULT8">
    <property type="glycosylation" value="25 sites, 4 N-linked glycans (4 sites), 2 O-linked glycans (21 sites)"/>
</dbReference>
<dbReference type="iPTMnet" id="Q9ULT8"/>
<dbReference type="PhosphoSitePlus" id="Q9ULT8"/>
<dbReference type="SwissPalm" id="Q9ULT8"/>
<dbReference type="BioMuta" id="HECTD1"/>
<dbReference type="DMDM" id="313104227"/>
<dbReference type="jPOST" id="Q9ULT8"/>
<dbReference type="MassIVE" id="Q9ULT8"/>
<dbReference type="PaxDb" id="9606-ENSP00000382269"/>
<dbReference type="PeptideAtlas" id="Q9ULT8"/>
<dbReference type="ProteomicsDB" id="85108"/>
<dbReference type="Pumba" id="Q9ULT8"/>
<dbReference type="Antibodypedia" id="5457">
    <property type="antibodies" value="116 antibodies from 25 providers"/>
</dbReference>
<dbReference type="DNASU" id="25831"/>
<dbReference type="Ensembl" id="ENST00000399332.6">
    <property type="protein sequence ID" value="ENSP00000382269.1"/>
    <property type="gene ID" value="ENSG00000092148.14"/>
</dbReference>
<dbReference type="Ensembl" id="ENST00000553700.5">
    <property type="protein sequence ID" value="ENSP00000450697.1"/>
    <property type="gene ID" value="ENSG00000092148.14"/>
</dbReference>
<dbReference type="GeneID" id="25831"/>
<dbReference type="KEGG" id="hsa:25831"/>
<dbReference type="MANE-Select" id="ENST00000399332.6">
    <property type="protein sequence ID" value="ENSP00000382269.1"/>
    <property type="RefSeq nucleotide sequence ID" value="NM_015382.4"/>
    <property type="RefSeq protein sequence ID" value="NP_056197.3"/>
</dbReference>
<dbReference type="UCSC" id="uc001wrc.1">
    <property type="organism name" value="human"/>
</dbReference>
<dbReference type="AGR" id="HGNC:20157"/>
<dbReference type="CTD" id="25831"/>
<dbReference type="DisGeNET" id="25831"/>
<dbReference type="GeneCards" id="HECTD1"/>
<dbReference type="HGNC" id="HGNC:20157">
    <property type="gene designation" value="HECTD1"/>
</dbReference>
<dbReference type="HPA" id="ENSG00000092148">
    <property type="expression patterns" value="Tissue enhanced (skeletal)"/>
</dbReference>
<dbReference type="MIM" id="618649">
    <property type="type" value="gene"/>
</dbReference>
<dbReference type="neXtProt" id="NX_Q9ULT8"/>
<dbReference type="OpenTargets" id="ENSG00000092148"/>
<dbReference type="PharmGKB" id="PA134989284"/>
<dbReference type="VEuPathDB" id="HostDB:ENSG00000092148"/>
<dbReference type="eggNOG" id="KOG4276">
    <property type="taxonomic scope" value="Eukaryota"/>
</dbReference>
<dbReference type="GeneTree" id="ENSGT00940000156572"/>
<dbReference type="HOGENOM" id="CLU_000869_0_0_1"/>
<dbReference type="InParanoid" id="Q9ULT8"/>
<dbReference type="OMA" id="INHTLTM"/>
<dbReference type="OrthoDB" id="412600at2759"/>
<dbReference type="PAN-GO" id="Q9ULT8">
    <property type="GO annotations" value="5 GO annotations based on evolutionary models"/>
</dbReference>
<dbReference type="PhylomeDB" id="Q9ULT8"/>
<dbReference type="TreeFam" id="TF323674"/>
<dbReference type="PathwayCommons" id="Q9ULT8"/>
<dbReference type="Reactome" id="R-HSA-983168">
    <property type="pathway name" value="Antigen processing: Ubiquitination &amp; Proteasome degradation"/>
</dbReference>
<dbReference type="SignaLink" id="Q9ULT8"/>
<dbReference type="SIGNOR" id="Q9ULT8"/>
<dbReference type="UniPathway" id="UPA00143"/>
<dbReference type="BioGRID-ORCS" id="25831">
    <property type="hits" value="305 hits in 1213 CRISPR screens"/>
</dbReference>
<dbReference type="ChiTaRS" id="HECTD1">
    <property type="organism name" value="human"/>
</dbReference>
<dbReference type="EvolutionaryTrace" id="Q9ULT8"/>
<dbReference type="GenomeRNAi" id="25831"/>
<dbReference type="Pharos" id="Q9ULT8">
    <property type="development level" value="Tbio"/>
</dbReference>
<dbReference type="PRO" id="PR:Q9ULT8"/>
<dbReference type="Proteomes" id="UP000005640">
    <property type="component" value="Chromosome 14"/>
</dbReference>
<dbReference type="RNAct" id="Q9ULT8">
    <property type="molecule type" value="protein"/>
</dbReference>
<dbReference type="Bgee" id="ENSG00000092148">
    <property type="expression patterns" value="Expressed in tibialis anterior and 176 other cell types or tissues"/>
</dbReference>
<dbReference type="ExpressionAtlas" id="Q9ULT8">
    <property type="expression patterns" value="baseline and differential"/>
</dbReference>
<dbReference type="GO" id="GO:0046872">
    <property type="term" value="F:metal ion binding"/>
    <property type="evidence" value="ECO:0007669"/>
    <property type="project" value="InterPro"/>
</dbReference>
<dbReference type="GO" id="GO:0061630">
    <property type="term" value="F:ubiquitin protein ligase activity"/>
    <property type="evidence" value="ECO:0000314"/>
    <property type="project" value="UniProtKB"/>
</dbReference>
<dbReference type="GO" id="GO:0035904">
    <property type="term" value="P:aorta development"/>
    <property type="evidence" value="ECO:0000250"/>
    <property type="project" value="BHF-UCL"/>
</dbReference>
<dbReference type="GO" id="GO:0003170">
    <property type="term" value="P:heart valve development"/>
    <property type="evidence" value="ECO:0000250"/>
    <property type="project" value="BHF-UCL"/>
</dbReference>
<dbReference type="GO" id="GO:0032436">
    <property type="term" value="P:positive regulation of proteasomal ubiquitin-dependent protein catabolic process"/>
    <property type="evidence" value="ECO:0000250"/>
    <property type="project" value="FlyBase"/>
</dbReference>
<dbReference type="GO" id="GO:0016567">
    <property type="term" value="P:protein ubiquitination"/>
    <property type="evidence" value="ECO:0007669"/>
    <property type="project" value="UniProtKB-UniPathway"/>
</dbReference>
<dbReference type="GO" id="GO:0006511">
    <property type="term" value="P:ubiquitin-dependent protein catabolic process"/>
    <property type="evidence" value="ECO:0007669"/>
    <property type="project" value="InterPro"/>
</dbReference>
<dbReference type="GO" id="GO:0003281">
    <property type="term" value="P:ventricular septum development"/>
    <property type="evidence" value="ECO:0000250"/>
    <property type="project" value="BHF-UCL"/>
</dbReference>
<dbReference type="CDD" id="cd21062">
    <property type="entry name" value="BTHB_HectD1"/>
    <property type="match status" value="1"/>
</dbReference>
<dbReference type="CDD" id="cd00078">
    <property type="entry name" value="HECTc"/>
    <property type="match status" value="1"/>
</dbReference>
<dbReference type="FunFam" id="1.25.10.10:FF:000051">
    <property type="entry name" value="E3 ubiquitin-protein ligase HECTD1 isoform X1"/>
    <property type="match status" value="1"/>
</dbReference>
<dbReference type="FunFam" id="2.30.30.40:FF:000085">
    <property type="entry name" value="E3 ubiquitin-protein ligase HECTD1 isoform X1"/>
    <property type="match status" value="1"/>
</dbReference>
<dbReference type="FunFam" id="2.60.120.260:FF:000014">
    <property type="entry name" value="E3 ubiquitin-protein ligase HECTD1 isoform X1"/>
    <property type="match status" value="1"/>
</dbReference>
<dbReference type="FunFam" id="3.30.2160.10:FF:000009">
    <property type="entry name" value="E3 ubiquitin-protein ligase HECTD1 isoform X1"/>
    <property type="match status" value="1"/>
</dbReference>
<dbReference type="FunFam" id="3.90.1750.10:FF:000018">
    <property type="entry name" value="E3 ubiquitin-protein ligase HECTD1 isoform X1"/>
    <property type="match status" value="1"/>
</dbReference>
<dbReference type="FunFam" id="3.90.1750.10:FF:000021">
    <property type="entry name" value="E3 ubiquitin-protein ligase HECTD1 isoform X1"/>
    <property type="match status" value="1"/>
</dbReference>
<dbReference type="FunFam" id="1.25.40.20:FF:000033">
    <property type="entry name" value="E3 ubiquitin-protein ligase HECTD1 isoform X2"/>
    <property type="match status" value="1"/>
</dbReference>
<dbReference type="FunFam" id="1.10.720.80:FF:000001">
    <property type="entry name" value="E3 ubiquitin-protein ligase HECTD1 isoform X3"/>
    <property type="match status" value="1"/>
</dbReference>
<dbReference type="FunFam" id="3.30.2410.10:FF:000007">
    <property type="entry name" value="Putative E3 ubiquitin-protein ligase HECTD1"/>
    <property type="match status" value="1"/>
</dbReference>
<dbReference type="Gene3D" id="1.10.720.80">
    <property type="match status" value="1"/>
</dbReference>
<dbReference type="Gene3D" id="1.25.40.20">
    <property type="entry name" value="Ankyrin repeat-containing domain"/>
    <property type="match status" value="1"/>
</dbReference>
<dbReference type="Gene3D" id="2.60.120.260">
    <property type="entry name" value="Galactose-binding domain-like"/>
    <property type="match status" value="1"/>
</dbReference>
<dbReference type="Gene3D" id="3.30.2160.10">
    <property type="entry name" value="Hect, E3 ligase catalytic domain"/>
    <property type="match status" value="1"/>
</dbReference>
<dbReference type="Gene3D" id="3.30.2410.10">
    <property type="entry name" value="Hect, E3 ligase catalytic domain"/>
    <property type="match status" value="1"/>
</dbReference>
<dbReference type="Gene3D" id="3.90.1750.10">
    <property type="entry name" value="Hect, E3 ligase catalytic domains"/>
    <property type="match status" value="1"/>
</dbReference>
<dbReference type="Gene3D" id="1.25.10.10">
    <property type="entry name" value="Leucine-rich Repeat Variant"/>
    <property type="match status" value="1"/>
</dbReference>
<dbReference type="Gene3D" id="2.30.30.40">
    <property type="entry name" value="SH3 Domains"/>
    <property type="match status" value="1"/>
</dbReference>
<dbReference type="InterPro" id="IPR002110">
    <property type="entry name" value="Ankyrin_rpt"/>
</dbReference>
<dbReference type="InterPro" id="IPR036770">
    <property type="entry name" value="Ankyrin_rpt-contain_sf"/>
</dbReference>
<dbReference type="InterPro" id="IPR011989">
    <property type="entry name" value="ARM-like"/>
</dbReference>
<dbReference type="InterPro" id="IPR016024">
    <property type="entry name" value="ARM-type_fold"/>
</dbReference>
<dbReference type="InterPro" id="IPR041200">
    <property type="entry name" value="FKBP3_BTHB"/>
</dbReference>
<dbReference type="InterPro" id="IPR008979">
    <property type="entry name" value="Galactose-bd-like_sf"/>
</dbReference>
<dbReference type="InterPro" id="IPR000569">
    <property type="entry name" value="HECT_dom"/>
</dbReference>
<dbReference type="InterPro" id="IPR035983">
    <property type="entry name" value="Hect_E3_ubiquitin_ligase"/>
</dbReference>
<dbReference type="InterPro" id="IPR045322">
    <property type="entry name" value="HECTD1/TRIP12-like"/>
</dbReference>
<dbReference type="InterPro" id="IPR010606">
    <property type="entry name" value="Mib_Herc2"/>
</dbReference>
<dbReference type="InterPro" id="IPR037252">
    <property type="entry name" value="Mib_Herc2_sf"/>
</dbReference>
<dbReference type="InterPro" id="IPR012919">
    <property type="entry name" value="SUN_dom"/>
</dbReference>
<dbReference type="PANTHER" id="PTHR45670:SF1">
    <property type="entry name" value="E3 UBIQUITIN-PROTEIN LIGASE HECTD1"/>
    <property type="match status" value="1"/>
</dbReference>
<dbReference type="PANTHER" id="PTHR45670">
    <property type="entry name" value="E3 UBIQUITIN-PROTEIN LIGASE TRIP12"/>
    <property type="match status" value="1"/>
</dbReference>
<dbReference type="Pfam" id="PF12796">
    <property type="entry name" value="Ank_2"/>
    <property type="match status" value="1"/>
</dbReference>
<dbReference type="Pfam" id="PF18410">
    <property type="entry name" value="BTHB"/>
    <property type="match status" value="1"/>
</dbReference>
<dbReference type="Pfam" id="PF00632">
    <property type="entry name" value="HECT"/>
    <property type="match status" value="1"/>
</dbReference>
<dbReference type="Pfam" id="PF06701">
    <property type="entry name" value="MIB_HERC2"/>
    <property type="match status" value="1"/>
</dbReference>
<dbReference type="Pfam" id="PF07738">
    <property type="entry name" value="Sad1_UNC"/>
    <property type="match status" value="1"/>
</dbReference>
<dbReference type="SMART" id="SM00248">
    <property type="entry name" value="ANK"/>
    <property type="match status" value="3"/>
</dbReference>
<dbReference type="SMART" id="SM00119">
    <property type="entry name" value="HECTc"/>
    <property type="match status" value="1"/>
</dbReference>
<dbReference type="SUPFAM" id="SSF48403">
    <property type="entry name" value="Ankyrin repeat"/>
    <property type="match status" value="1"/>
</dbReference>
<dbReference type="SUPFAM" id="SSF48371">
    <property type="entry name" value="ARM repeat"/>
    <property type="match status" value="1"/>
</dbReference>
<dbReference type="SUPFAM" id="SSF49785">
    <property type="entry name" value="Galactose-binding domain-like"/>
    <property type="match status" value="1"/>
</dbReference>
<dbReference type="SUPFAM" id="SSF56204">
    <property type="entry name" value="Hect, E3 ligase catalytic domain"/>
    <property type="match status" value="1"/>
</dbReference>
<dbReference type="SUPFAM" id="SSF159034">
    <property type="entry name" value="Mib/herc2 domain-like"/>
    <property type="match status" value="1"/>
</dbReference>
<dbReference type="PROSITE" id="PS50297">
    <property type="entry name" value="ANK_REP_REGION"/>
    <property type="match status" value="1"/>
</dbReference>
<dbReference type="PROSITE" id="PS50088">
    <property type="entry name" value="ANK_REPEAT"/>
    <property type="match status" value="2"/>
</dbReference>
<dbReference type="PROSITE" id="PS50237">
    <property type="entry name" value="HECT"/>
    <property type="match status" value="1"/>
</dbReference>
<dbReference type="PROSITE" id="PS51416">
    <property type="entry name" value="MIB_HERC2"/>
    <property type="match status" value="1"/>
</dbReference>
<proteinExistence type="evidence at protein level"/>
<name>HECD1_HUMAN</name>
<comment type="function">
    <text evidence="1 6">E3 ubiquitin-protein ligase which accepts ubiquitin from an E2 ubiquitin-conjugating enzyme in the form of a thioester and then directly transfers the ubiquitin to targeted substrates (PubMed:33711283). Mediates 'Lys-63'-linked polyubiquitination of HSP90AA1 which leads to its intracellular localization and reduced secretion (By similarity). Negatively regulating HSP90AA1 secretion in cranial mesenchyme cells may impair their emigration and may be essential for the correct development of the cranial neural folds and neural tube closure (By similarity). Catalyzes ubiquitination and degradation of ZNF622, an assembly factor for the ribosomal 60S subunit, in hematopoietic cells, thereby promoting hematopoietic stem cell renewal (PubMed:33711283).</text>
</comment>
<comment type="catalytic activity">
    <reaction evidence="6">
        <text>S-ubiquitinyl-[E2 ubiquitin-conjugating enzyme]-L-cysteine + [acceptor protein]-L-lysine = [E2 ubiquitin-conjugating enzyme]-L-cysteine + N(6)-ubiquitinyl-[acceptor protein]-L-lysine.</text>
        <dbReference type="EC" id="2.3.2.26"/>
    </reaction>
</comment>
<comment type="pathway">
    <text evidence="6">Protein modification; protein ubiquitination.</text>
</comment>
<comment type="subunit">
    <text evidence="5">Interacts with IGSF1 (PubMed:12421765).</text>
</comment>
<comment type="interaction">
    <interactant intactId="EBI-310559">
        <id>Q9ULT8</id>
    </interactant>
    <interactant intactId="EBI-10977847">
        <id>Q76I76</id>
        <label>SSH2</label>
    </interactant>
    <organismsDiffer>false</organismsDiffer>
    <experiments>2</experiments>
</comment>
<comment type="similarity">
    <text evidence="10">Belongs to the UPL family. K-HECT subfamily.</text>
</comment>
<evidence type="ECO:0000250" key="1">
    <source>
        <dbReference type="UniProtKB" id="Q69ZR2"/>
    </source>
</evidence>
<evidence type="ECO:0000255" key="2">
    <source>
        <dbReference type="PROSITE-ProRule" id="PRU00104"/>
    </source>
</evidence>
<evidence type="ECO:0000255" key="3">
    <source>
        <dbReference type="PROSITE-ProRule" id="PRU00749"/>
    </source>
</evidence>
<evidence type="ECO:0000256" key="4">
    <source>
        <dbReference type="SAM" id="MobiDB-lite"/>
    </source>
</evidence>
<evidence type="ECO:0000269" key="5">
    <source>
    </source>
</evidence>
<evidence type="ECO:0000269" key="6">
    <source>
    </source>
</evidence>
<evidence type="ECO:0000269" key="7">
    <source ref="1"/>
</evidence>
<evidence type="ECO:0000303" key="8">
    <source>
    </source>
</evidence>
<evidence type="ECO:0000303" key="9">
    <source ref="1"/>
</evidence>
<evidence type="ECO:0000305" key="10"/>
<evidence type="ECO:0000312" key="11">
    <source>
        <dbReference type="HGNC" id="HGNC:20157"/>
    </source>
</evidence>
<evidence type="ECO:0007744" key="12">
    <source>
    </source>
</evidence>
<evidence type="ECO:0007744" key="13">
    <source>
    </source>
</evidence>
<evidence type="ECO:0007744" key="14">
    <source>
    </source>
</evidence>
<evidence type="ECO:0007744" key="15">
    <source>
    </source>
</evidence>
<evidence type="ECO:0007829" key="16">
    <source>
        <dbReference type="PDB" id="2DK3"/>
    </source>
</evidence>
<evidence type="ECO:0007829" key="17">
    <source>
        <dbReference type="PDB" id="2LC3"/>
    </source>
</evidence>
<evidence type="ECO:0007829" key="18">
    <source>
        <dbReference type="PDB" id="3DKM"/>
    </source>
</evidence>
<organism>
    <name type="scientific">Homo sapiens</name>
    <name type="common">Human</name>
    <dbReference type="NCBI Taxonomy" id="9606"/>
    <lineage>
        <taxon>Eukaryota</taxon>
        <taxon>Metazoa</taxon>
        <taxon>Chordata</taxon>
        <taxon>Craniata</taxon>
        <taxon>Vertebrata</taxon>
        <taxon>Euteleostomi</taxon>
        <taxon>Mammalia</taxon>
        <taxon>Eutheria</taxon>
        <taxon>Euarchontoglires</taxon>
        <taxon>Primates</taxon>
        <taxon>Haplorrhini</taxon>
        <taxon>Catarrhini</taxon>
        <taxon>Hominidae</taxon>
        <taxon>Homo</taxon>
    </lineage>
</organism>
<feature type="chain" id="PRO_0000083945" description="E3 ubiquitin-protein ligase HECTD1">
    <location>
        <begin position="1"/>
        <end position="2610"/>
    </location>
</feature>
<feature type="repeat" description="ANK 1">
    <location>
        <begin position="395"/>
        <end position="424"/>
    </location>
</feature>
<feature type="repeat" description="ANK 2">
    <location>
        <begin position="426"/>
        <end position="455"/>
    </location>
</feature>
<feature type="repeat" description="ANK 3">
    <location>
        <begin position="459"/>
        <end position="491"/>
    </location>
</feature>
<feature type="repeat" description="ANK 4">
    <location>
        <begin position="579"/>
        <end position="612"/>
    </location>
</feature>
<feature type="domain" description="MIB/HERC2" evidence="3">
    <location>
        <begin position="1266"/>
        <end position="1338"/>
    </location>
</feature>
<feature type="domain" description="HECT" evidence="2">
    <location>
        <begin position="2151"/>
        <end position="2610"/>
    </location>
</feature>
<feature type="region of interest" description="Disordered" evidence="4">
    <location>
        <begin position="246"/>
        <end position="269"/>
    </location>
</feature>
<feature type="region of interest" description="Disordered" evidence="4">
    <location>
        <begin position="489"/>
        <end position="513"/>
    </location>
</feature>
<feature type="region of interest" description="Disordered" evidence="4">
    <location>
        <begin position="627"/>
        <end position="657"/>
    </location>
</feature>
<feature type="region of interest" description="Disordered" evidence="4">
    <location>
        <begin position="707"/>
        <end position="748"/>
    </location>
</feature>
<feature type="region of interest" description="Disordered" evidence="4">
    <location>
        <begin position="1343"/>
        <end position="1406"/>
    </location>
</feature>
<feature type="region of interest" description="Disordered" evidence="4">
    <location>
        <begin position="1433"/>
        <end position="1483"/>
    </location>
</feature>
<feature type="region of interest" description="Disordered" evidence="4">
    <location>
        <begin position="1496"/>
        <end position="1515"/>
    </location>
</feature>
<feature type="region of interest" description="Disordered" evidence="4">
    <location>
        <begin position="1592"/>
        <end position="1611"/>
    </location>
</feature>
<feature type="region of interest" description="Disordered" evidence="4">
    <location>
        <begin position="1674"/>
        <end position="1757"/>
    </location>
</feature>
<feature type="region of interest" description="Disordered" evidence="4">
    <location>
        <begin position="1777"/>
        <end position="1797"/>
    </location>
</feature>
<feature type="region of interest" description="K-box">
    <location>
        <begin position="2029"/>
        <end position="2103"/>
    </location>
</feature>
<feature type="region of interest" description="Disordered" evidence="4">
    <location>
        <begin position="2297"/>
        <end position="2318"/>
    </location>
</feature>
<feature type="compositionally biased region" description="Polar residues" evidence="4">
    <location>
        <begin position="258"/>
        <end position="269"/>
    </location>
</feature>
<feature type="compositionally biased region" description="Basic and acidic residues" evidence="4">
    <location>
        <begin position="491"/>
        <end position="501"/>
    </location>
</feature>
<feature type="compositionally biased region" description="Basic and acidic residues" evidence="4">
    <location>
        <begin position="639"/>
        <end position="657"/>
    </location>
</feature>
<feature type="compositionally biased region" description="Low complexity" evidence="4">
    <location>
        <begin position="707"/>
        <end position="717"/>
    </location>
</feature>
<feature type="compositionally biased region" description="Basic and acidic residues" evidence="4">
    <location>
        <begin position="718"/>
        <end position="729"/>
    </location>
</feature>
<feature type="compositionally biased region" description="Polar residues" evidence="4">
    <location>
        <begin position="1348"/>
        <end position="1365"/>
    </location>
</feature>
<feature type="compositionally biased region" description="Low complexity" evidence="4">
    <location>
        <begin position="1373"/>
        <end position="1395"/>
    </location>
</feature>
<feature type="compositionally biased region" description="Low complexity" evidence="4">
    <location>
        <begin position="1441"/>
        <end position="1458"/>
    </location>
</feature>
<feature type="compositionally biased region" description="Polar residues" evidence="4">
    <location>
        <begin position="1469"/>
        <end position="1479"/>
    </location>
</feature>
<feature type="compositionally biased region" description="Low complexity" evidence="4">
    <location>
        <begin position="1600"/>
        <end position="1611"/>
    </location>
</feature>
<feature type="compositionally biased region" description="Acidic residues" evidence="4">
    <location>
        <begin position="1674"/>
        <end position="1703"/>
    </location>
</feature>
<feature type="active site" description="Glycyl thioester intermediate" evidence="2">
    <location>
        <position position="2579"/>
    </location>
</feature>
<feature type="modified residue" description="Phosphoserine" evidence="13">
    <location>
        <position position="631"/>
    </location>
</feature>
<feature type="modified residue" description="Phosphoserine" evidence="1">
    <location>
        <position position="640"/>
    </location>
</feature>
<feature type="modified residue" description="Phosphoserine" evidence="1">
    <location>
        <position position="1384"/>
    </location>
</feature>
<feature type="modified residue" description="Phosphoserine" evidence="12">
    <location>
        <position position="1488"/>
    </location>
</feature>
<feature type="modified residue" description="Phosphoserine" evidence="1">
    <location>
        <position position="1567"/>
    </location>
</feature>
<feature type="modified residue" description="Phosphothreonine" evidence="14">
    <location>
        <position position="1760"/>
    </location>
</feature>
<feature type="modified residue" description="Phosphoserine" evidence="14">
    <location>
        <position position="1772"/>
    </location>
</feature>
<feature type="modified residue" description="Phosphoserine" evidence="15">
    <location>
        <position position="2318"/>
    </location>
</feature>
<feature type="sequence variant" id="VAR_059666" description="In dbSNP:rs11620816.">
    <original>Q</original>
    <variation>H</variation>
    <location>
        <position position="656"/>
    </location>
</feature>
<feature type="sequence variant" id="VAR_067707" description="In dbSNP:rs1315794." evidence="7">
    <original>P</original>
    <variation>L</variation>
    <location>
        <position position="2027"/>
    </location>
</feature>
<feature type="mutagenesis site" description="Abolished E3 ubiquitin-protein ligase activity." evidence="6">
    <original>C</original>
    <variation>G</variation>
    <location>
        <position position="2579"/>
    </location>
</feature>
<feature type="sequence conflict" description="In Ref. 1; AAP13073." evidence="10" ref="1">
    <original>K</original>
    <variation>Q</variation>
    <location>
        <position position="561"/>
    </location>
</feature>
<feature type="sequence conflict" description="In Ref. 1; AAP13073." evidence="10" ref="1">
    <original>L</original>
    <variation>I</variation>
    <location>
        <position position="603"/>
    </location>
</feature>
<feature type="sequence conflict" description="In Ref. 1; AAP13073." evidence="10" ref="1">
    <original>FLD</original>
    <variation>YKH</variation>
    <location>
        <begin position="611"/>
        <end position="613"/>
    </location>
</feature>
<feature type="sequence conflict" description="In Ref. 1; AAP13073." evidence="10" ref="1">
    <original>K</original>
    <variation>Q</variation>
    <location>
        <position position="653"/>
    </location>
</feature>
<feature type="sequence conflict" description="In Ref. 1; AAP13073." evidence="10" ref="1">
    <original>E</original>
    <variation>K</variation>
    <location>
        <position position="894"/>
    </location>
</feature>
<feature type="sequence conflict" description="In Ref. 1; AAP13073." evidence="10" ref="1">
    <original>SMDLDMKQDCSQLVERIN</original>
    <variation>VSIFRATKQKQNEVPKVILS</variation>
    <location>
        <begin position="927"/>
        <end position="944"/>
    </location>
</feature>
<feature type="sequence conflict" description="In Ref. 1; AAP13073." evidence="10" ref="1">
    <original>S</original>
    <variation>T</variation>
    <location>
        <position position="951"/>
    </location>
</feature>
<feature type="sequence conflict" description="In Ref. 2; BAA86445." evidence="10" ref="2">
    <original>I</original>
    <variation>T</variation>
    <location>
        <position position="1281"/>
    </location>
</feature>
<feature type="helix" evidence="16">
    <location>
        <begin position="1270"/>
        <end position="1272"/>
    </location>
</feature>
<feature type="strand" evidence="18">
    <location>
        <begin position="1279"/>
        <end position="1282"/>
    </location>
</feature>
<feature type="turn" evidence="18">
    <location>
        <begin position="1289"/>
        <end position="1292"/>
    </location>
</feature>
<feature type="strand" evidence="18">
    <location>
        <begin position="1299"/>
        <end position="1301"/>
    </location>
</feature>
<feature type="strand" evidence="18">
    <location>
        <begin position="1309"/>
        <end position="1314"/>
    </location>
</feature>
<feature type="turn" evidence="16">
    <location>
        <begin position="1315"/>
        <end position="1317"/>
    </location>
</feature>
<feature type="strand" evidence="18">
    <location>
        <begin position="1319"/>
        <end position="1325"/>
    </location>
</feature>
<feature type="helix" evidence="18">
    <location>
        <begin position="1326"/>
        <end position="1328"/>
    </location>
</feature>
<feature type="strand" evidence="18">
    <location>
        <begin position="1332"/>
        <end position="1334"/>
    </location>
</feature>
<feature type="helix" evidence="17">
    <location>
        <begin position="1883"/>
        <end position="1886"/>
    </location>
</feature>
<feature type="helix" evidence="17">
    <location>
        <begin position="1896"/>
        <end position="1902"/>
    </location>
</feature>
<feature type="strand" evidence="17">
    <location>
        <begin position="1905"/>
        <end position="1908"/>
    </location>
</feature>
<feature type="helix" evidence="17">
    <location>
        <begin position="1910"/>
        <end position="1920"/>
    </location>
</feature>
<feature type="helix" evidence="17">
    <location>
        <begin position="1923"/>
        <end position="1928"/>
    </location>
</feature>
<feature type="helix" evidence="17">
    <location>
        <begin position="1935"/>
        <end position="1941"/>
    </location>
</feature>
<feature type="helix" evidence="17">
    <location>
        <begin position="1944"/>
        <end position="1957"/>
    </location>
</feature>
<feature type="turn" evidence="17">
    <location>
        <begin position="1960"/>
        <end position="1962"/>
    </location>
</feature>